<gene>
    <name evidence="1" type="primary">rpsJ</name>
    <name type="ordered locus">CBU_0237</name>
</gene>
<evidence type="ECO:0000255" key="1">
    <source>
        <dbReference type="HAMAP-Rule" id="MF_00508"/>
    </source>
</evidence>
<evidence type="ECO:0000305" key="2"/>
<protein>
    <recommendedName>
        <fullName evidence="1">Small ribosomal subunit protein uS10</fullName>
    </recommendedName>
    <alternativeName>
        <fullName evidence="2">30S ribosomal protein S10</fullName>
    </alternativeName>
</protein>
<organism>
    <name type="scientific">Coxiella burnetii (strain RSA 493 / Nine Mile phase I)</name>
    <dbReference type="NCBI Taxonomy" id="227377"/>
    <lineage>
        <taxon>Bacteria</taxon>
        <taxon>Pseudomonadati</taxon>
        <taxon>Pseudomonadota</taxon>
        <taxon>Gammaproteobacteria</taxon>
        <taxon>Legionellales</taxon>
        <taxon>Coxiellaceae</taxon>
        <taxon>Coxiella</taxon>
    </lineage>
</organism>
<name>RS10_COXBU</name>
<sequence>MSDNQRIRIRLKAFDHRLIDRSTREIVETARRTGAIIRGPILLPTKIERYTVLISPNIDKDARDQYEIRTHKRLVDISEPTDKTVDALMKLDLAAGVDVQIELLNKKSGA</sequence>
<accession>Q83ES5</accession>
<feature type="chain" id="PRO_0000146526" description="Small ribosomal subunit protein uS10">
    <location>
        <begin position="1"/>
        <end position="110"/>
    </location>
</feature>
<dbReference type="EMBL" id="AE016828">
    <property type="protein sequence ID" value="AAO89795.2"/>
    <property type="status" value="ALT_INIT"/>
    <property type="molecule type" value="Genomic_DNA"/>
</dbReference>
<dbReference type="RefSeq" id="NP_819281.2">
    <property type="nucleotide sequence ID" value="NC_002971.3"/>
</dbReference>
<dbReference type="RefSeq" id="WP_005771548.1">
    <property type="nucleotide sequence ID" value="NZ_CDBG01000001.1"/>
</dbReference>
<dbReference type="RefSeq" id="WP_010957452.1">
    <property type="nucleotide sequence ID" value="NC_002971.4"/>
</dbReference>
<dbReference type="SMR" id="Q83ES5"/>
<dbReference type="STRING" id="227377.CBU_0237"/>
<dbReference type="DNASU" id="1208118"/>
<dbReference type="EnsemblBacteria" id="AAO89795">
    <property type="protein sequence ID" value="AAO89795"/>
    <property type="gene ID" value="CBU_0237"/>
</dbReference>
<dbReference type="GeneID" id="1208118"/>
<dbReference type="KEGG" id="cbu:CBU_0237"/>
<dbReference type="PATRIC" id="fig|227377.7.peg.232"/>
<dbReference type="eggNOG" id="COG0051">
    <property type="taxonomic scope" value="Bacteria"/>
</dbReference>
<dbReference type="HOGENOM" id="CLU_122625_1_3_6"/>
<dbReference type="OrthoDB" id="9804464at2"/>
<dbReference type="Proteomes" id="UP000002671">
    <property type="component" value="Chromosome"/>
</dbReference>
<dbReference type="GO" id="GO:0015935">
    <property type="term" value="C:small ribosomal subunit"/>
    <property type="evidence" value="ECO:0000318"/>
    <property type="project" value="GO_Central"/>
</dbReference>
<dbReference type="GO" id="GO:0003735">
    <property type="term" value="F:structural constituent of ribosome"/>
    <property type="evidence" value="ECO:0000318"/>
    <property type="project" value="GO_Central"/>
</dbReference>
<dbReference type="GO" id="GO:0000049">
    <property type="term" value="F:tRNA binding"/>
    <property type="evidence" value="ECO:0007669"/>
    <property type="project" value="UniProtKB-UniRule"/>
</dbReference>
<dbReference type="GO" id="GO:0006412">
    <property type="term" value="P:translation"/>
    <property type="evidence" value="ECO:0007669"/>
    <property type="project" value="UniProtKB-UniRule"/>
</dbReference>
<dbReference type="FunFam" id="3.30.70.600:FF:000001">
    <property type="entry name" value="30S ribosomal protein S10"/>
    <property type="match status" value="1"/>
</dbReference>
<dbReference type="Gene3D" id="3.30.70.600">
    <property type="entry name" value="Ribosomal protein S10 domain"/>
    <property type="match status" value="1"/>
</dbReference>
<dbReference type="HAMAP" id="MF_00508">
    <property type="entry name" value="Ribosomal_uS10"/>
    <property type="match status" value="1"/>
</dbReference>
<dbReference type="InterPro" id="IPR001848">
    <property type="entry name" value="Ribosomal_uS10"/>
</dbReference>
<dbReference type="InterPro" id="IPR018268">
    <property type="entry name" value="Ribosomal_uS10_CS"/>
</dbReference>
<dbReference type="InterPro" id="IPR027486">
    <property type="entry name" value="Ribosomal_uS10_dom"/>
</dbReference>
<dbReference type="InterPro" id="IPR036838">
    <property type="entry name" value="Ribosomal_uS10_dom_sf"/>
</dbReference>
<dbReference type="NCBIfam" id="NF001861">
    <property type="entry name" value="PRK00596.1"/>
    <property type="match status" value="1"/>
</dbReference>
<dbReference type="NCBIfam" id="TIGR01049">
    <property type="entry name" value="rpsJ_bact"/>
    <property type="match status" value="1"/>
</dbReference>
<dbReference type="PANTHER" id="PTHR11700">
    <property type="entry name" value="30S RIBOSOMAL PROTEIN S10 FAMILY MEMBER"/>
    <property type="match status" value="1"/>
</dbReference>
<dbReference type="Pfam" id="PF00338">
    <property type="entry name" value="Ribosomal_S10"/>
    <property type="match status" value="1"/>
</dbReference>
<dbReference type="PRINTS" id="PR00971">
    <property type="entry name" value="RIBOSOMALS10"/>
</dbReference>
<dbReference type="SMART" id="SM01403">
    <property type="entry name" value="Ribosomal_S10"/>
    <property type="match status" value="1"/>
</dbReference>
<dbReference type="SUPFAM" id="SSF54999">
    <property type="entry name" value="Ribosomal protein S10"/>
    <property type="match status" value="1"/>
</dbReference>
<dbReference type="PROSITE" id="PS00361">
    <property type="entry name" value="RIBOSOMAL_S10"/>
    <property type="match status" value="1"/>
</dbReference>
<reference key="1">
    <citation type="journal article" date="2003" name="Proc. Natl. Acad. Sci. U.S.A.">
        <title>Complete genome sequence of the Q-fever pathogen, Coxiella burnetii.</title>
        <authorList>
            <person name="Seshadri R."/>
            <person name="Paulsen I.T."/>
            <person name="Eisen J.A."/>
            <person name="Read T.D."/>
            <person name="Nelson K.E."/>
            <person name="Nelson W.C."/>
            <person name="Ward N.L."/>
            <person name="Tettelin H."/>
            <person name="Davidsen T.M."/>
            <person name="Beanan M.J."/>
            <person name="DeBoy R.T."/>
            <person name="Daugherty S.C."/>
            <person name="Brinkac L.M."/>
            <person name="Madupu R."/>
            <person name="Dodson R.J."/>
            <person name="Khouri H.M."/>
            <person name="Lee K.H."/>
            <person name="Carty H.A."/>
            <person name="Scanlan D."/>
            <person name="Heinzen R.A."/>
            <person name="Thompson H.A."/>
            <person name="Samuel J.E."/>
            <person name="Fraser C.M."/>
            <person name="Heidelberg J.F."/>
        </authorList>
    </citation>
    <scope>NUCLEOTIDE SEQUENCE [LARGE SCALE GENOMIC DNA]</scope>
    <source>
        <strain>RSA 493 / Nine Mile phase I</strain>
    </source>
</reference>
<comment type="function">
    <text evidence="1">Involved in the binding of tRNA to the ribosomes.</text>
</comment>
<comment type="subunit">
    <text evidence="1">Part of the 30S ribosomal subunit.</text>
</comment>
<comment type="similarity">
    <text evidence="1">Belongs to the universal ribosomal protein uS10 family.</text>
</comment>
<comment type="sequence caution" evidence="2">
    <conflict type="erroneous initiation">
        <sequence resource="EMBL-CDS" id="AAO89795"/>
    </conflict>
</comment>
<proteinExistence type="inferred from homology"/>
<keyword id="KW-1185">Reference proteome</keyword>
<keyword id="KW-0687">Ribonucleoprotein</keyword>
<keyword id="KW-0689">Ribosomal protein</keyword>